<proteinExistence type="inferred from homology"/>
<keyword id="KW-0496">Mitochondrion</keyword>
<keyword id="KW-1185">Reference proteome</keyword>
<gene>
    <name type="primary">KGD4</name>
    <name type="ORF">CTHT_0020930_1</name>
</gene>
<dbReference type="EMBL" id="GL988040">
    <property type="protein sequence ID" value="EGS22548.1"/>
    <property type="status" value="ALT_SEQ"/>
    <property type="molecule type" value="Genomic_DNA"/>
</dbReference>
<dbReference type="RefSeq" id="XP_006692567.1">
    <property type="nucleotide sequence ID" value="XM_006692504.1"/>
</dbReference>
<dbReference type="KEGG" id="cthr:CTHT_0020930"/>
<dbReference type="HOGENOM" id="CLU_723612_0_0_1"/>
<dbReference type="OrthoDB" id="2116030at2759"/>
<dbReference type="Proteomes" id="UP000008066">
    <property type="component" value="Unassembled WGS sequence"/>
</dbReference>
<dbReference type="GO" id="GO:0005739">
    <property type="term" value="C:mitochondrion"/>
    <property type="evidence" value="ECO:0007669"/>
    <property type="project" value="UniProtKB-SubCell"/>
</dbReference>
<dbReference type="GO" id="GO:0004591">
    <property type="term" value="F:oxoglutarate dehydrogenase (succinyl-transferring) activity"/>
    <property type="evidence" value="ECO:0007669"/>
    <property type="project" value="TreeGrafter"/>
</dbReference>
<dbReference type="GO" id="GO:0006103">
    <property type="term" value="P:2-oxoglutarate metabolic process"/>
    <property type="evidence" value="ECO:0007669"/>
    <property type="project" value="InterPro"/>
</dbReference>
<dbReference type="InterPro" id="IPR020373">
    <property type="entry name" value="Kgd4/YMR-31"/>
</dbReference>
<dbReference type="PANTHER" id="PTHR31601">
    <property type="entry name" value="28S RIBOSOMAL PROTEIN S36, MITOCHONDRIAL"/>
    <property type="match status" value="1"/>
</dbReference>
<dbReference type="PANTHER" id="PTHR31601:SF2">
    <property type="entry name" value="ALPHA-KETOGLUTARATE DEHYDROGENASE COMPONENT 4"/>
    <property type="match status" value="1"/>
</dbReference>
<dbReference type="Pfam" id="PF10937">
    <property type="entry name" value="Kgd4-YMR31"/>
    <property type="match status" value="1"/>
</dbReference>
<name>KGD4_CHATD</name>
<reference key="1">
    <citation type="journal article" date="2011" name="Cell">
        <title>Insight into structure and assembly of the nuclear pore complex by utilizing the genome of a eukaryotic thermophile.</title>
        <authorList>
            <person name="Amlacher S."/>
            <person name="Sarges P."/>
            <person name="Flemming D."/>
            <person name="van Noort V."/>
            <person name="Kunze R."/>
            <person name="Devos D.P."/>
            <person name="Arumugam M."/>
            <person name="Bork P."/>
            <person name="Hurt E."/>
        </authorList>
    </citation>
    <scope>NUCLEOTIDE SEQUENCE [LARGE SCALE GENOMIC DNA]</scope>
    <source>
        <strain>DSM 1495 / CBS 144.50 / IMI 039719</strain>
    </source>
</reference>
<evidence type="ECO:0000250" key="1">
    <source>
        <dbReference type="UniProtKB" id="P19955"/>
    </source>
</evidence>
<evidence type="ECO:0000305" key="2"/>
<accession>P9WES8</accession>
<accession>G0S3G5</accession>
<organism>
    <name type="scientific">Chaetomium thermophilum (strain DSM 1495 / CBS 144.50 / IMI 039719)</name>
    <name type="common">Thermochaetoides thermophila</name>
    <dbReference type="NCBI Taxonomy" id="759272"/>
    <lineage>
        <taxon>Eukaryota</taxon>
        <taxon>Fungi</taxon>
        <taxon>Dikarya</taxon>
        <taxon>Ascomycota</taxon>
        <taxon>Pezizomycotina</taxon>
        <taxon>Sordariomycetes</taxon>
        <taxon>Sordariomycetidae</taxon>
        <taxon>Sordariales</taxon>
        <taxon>Chaetomiaceae</taxon>
        <taxon>Thermochaetoides</taxon>
    </lineage>
</organism>
<feature type="chain" id="PRO_0000456472" description="Alpha-ketoglutarate dehydrogenase subunit 4, mitochondrial">
    <location>
        <begin position="1"/>
        <end position="135"/>
    </location>
</feature>
<sequence length="135" mass="14665">MFGTKALRAAQHAVRTPSIKFIGKRTIPAVVDHTPQPHPASPTKTLPASFLSSHATFSVYRDHAQQFGPLRKTITPNAGIGGSPAVALGPVEPPQGVYFDRNDLPERFRRQPLTPDEIEAIETGGGHLLYRGSYL</sequence>
<comment type="function">
    <text evidence="1">Molecular adapter that is necessary to a form a stable 2-oxoglutarate dehydrogenase enzyme complex (OGDC). Required for incorporation of the E3 subunit into the E1-E2 core of mitochondrial OGDC, and acting as a stability factor for the fully assembled complex.</text>
</comment>
<comment type="subunit">
    <text evidence="1">Component of the 2-oxoglutarate dehydrogenase complex (OGDC), also called alpha-ketoglutarate dehydrogenase (KGDH) complex. The copmplex is composed of the catalytic subunits OGDH (2-oxoglutarate dehydrogenase; also called E1 subunit), DLST (dihydrolipoamide succinyltransferase; also called E2 subunit) and DLD (dihydrolipoamide dehydrogenase; also called E3 subunit), and the assembly factor KGD4. Within OGDC, interacts (via N-terminus) with E3 subunit and (via C-terminus) with the complex core formed by E1 and E2 subunits.</text>
</comment>
<comment type="subcellular location">
    <subcellularLocation>
        <location evidence="1">Mitochondrion</location>
    </subcellularLocation>
</comment>
<comment type="similarity">
    <text evidence="2">Belongs to the alpha-ketoglutarate dehydrogenase component 4 family.</text>
</comment>
<comment type="sequence caution" evidence="2">
    <conflict type="erroneous gene model prediction">
        <sequence resource="EMBL-CDS" id="EGS22548"/>
    </conflict>
    <text>The predicted gene has been split into 2 genes: CTHT_0020930_1 and CTHT_0020930_2.</text>
</comment>
<protein>
    <recommendedName>
        <fullName>Alpha-ketoglutarate dehydrogenase subunit 4, mitochondrial</fullName>
        <shortName>alpha-KGDH subunit 4</shortName>
    </recommendedName>
    <alternativeName>
        <fullName>2-oxoglutarate dehydrogenase complex component 4</fullName>
        <shortName>OGDHC subunit 4</shortName>
    </alternativeName>
</protein>